<dbReference type="EMBL" id="AM902716">
    <property type="protein sequence ID" value="CAP43132.1"/>
    <property type="molecule type" value="Genomic_DNA"/>
</dbReference>
<dbReference type="SMR" id="A9IR50"/>
<dbReference type="STRING" id="94624.Bpet2790"/>
<dbReference type="KEGG" id="bpt:Bpet2790"/>
<dbReference type="eggNOG" id="COG1219">
    <property type="taxonomic scope" value="Bacteria"/>
</dbReference>
<dbReference type="Proteomes" id="UP000001225">
    <property type="component" value="Chromosome"/>
</dbReference>
<dbReference type="GO" id="GO:0009376">
    <property type="term" value="C:HslUV protease complex"/>
    <property type="evidence" value="ECO:0007669"/>
    <property type="project" value="TreeGrafter"/>
</dbReference>
<dbReference type="GO" id="GO:0005524">
    <property type="term" value="F:ATP binding"/>
    <property type="evidence" value="ECO:0007669"/>
    <property type="project" value="UniProtKB-UniRule"/>
</dbReference>
<dbReference type="GO" id="GO:0016887">
    <property type="term" value="F:ATP hydrolysis activity"/>
    <property type="evidence" value="ECO:0007669"/>
    <property type="project" value="InterPro"/>
</dbReference>
<dbReference type="GO" id="GO:0140662">
    <property type="term" value="F:ATP-dependent protein folding chaperone"/>
    <property type="evidence" value="ECO:0007669"/>
    <property type="project" value="InterPro"/>
</dbReference>
<dbReference type="GO" id="GO:0046983">
    <property type="term" value="F:protein dimerization activity"/>
    <property type="evidence" value="ECO:0007669"/>
    <property type="project" value="InterPro"/>
</dbReference>
<dbReference type="GO" id="GO:0051082">
    <property type="term" value="F:unfolded protein binding"/>
    <property type="evidence" value="ECO:0007669"/>
    <property type="project" value="UniProtKB-UniRule"/>
</dbReference>
<dbReference type="GO" id="GO:0008270">
    <property type="term" value="F:zinc ion binding"/>
    <property type="evidence" value="ECO:0007669"/>
    <property type="project" value="InterPro"/>
</dbReference>
<dbReference type="GO" id="GO:0051301">
    <property type="term" value="P:cell division"/>
    <property type="evidence" value="ECO:0007669"/>
    <property type="project" value="TreeGrafter"/>
</dbReference>
<dbReference type="GO" id="GO:0051603">
    <property type="term" value="P:proteolysis involved in protein catabolic process"/>
    <property type="evidence" value="ECO:0007669"/>
    <property type="project" value="TreeGrafter"/>
</dbReference>
<dbReference type="CDD" id="cd19497">
    <property type="entry name" value="RecA-like_ClpX"/>
    <property type="match status" value="1"/>
</dbReference>
<dbReference type="FunFam" id="1.10.8.60:FF:000002">
    <property type="entry name" value="ATP-dependent Clp protease ATP-binding subunit ClpX"/>
    <property type="match status" value="1"/>
</dbReference>
<dbReference type="FunFam" id="3.40.50.300:FF:000005">
    <property type="entry name" value="ATP-dependent Clp protease ATP-binding subunit ClpX"/>
    <property type="match status" value="1"/>
</dbReference>
<dbReference type="Gene3D" id="1.10.8.60">
    <property type="match status" value="1"/>
</dbReference>
<dbReference type="Gene3D" id="6.20.220.10">
    <property type="entry name" value="ClpX chaperone, C4-type zinc finger domain"/>
    <property type="match status" value="1"/>
</dbReference>
<dbReference type="Gene3D" id="3.40.50.300">
    <property type="entry name" value="P-loop containing nucleotide triphosphate hydrolases"/>
    <property type="match status" value="1"/>
</dbReference>
<dbReference type="HAMAP" id="MF_00175">
    <property type="entry name" value="ClpX"/>
    <property type="match status" value="1"/>
</dbReference>
<dbReference type="InterPro" id="IPR003593">
    <property type="entry name" value="AAA+_ATPase"/>
</dbReference>
<dbReference type="InterPro" id="IPR050052">
    <property type="entry name" value="ATP-dep_Clp_protease_ClpX"/>
</dbReference>
<dbReference type="InterPro" id="IPR003959">
    <property type="entry name" value="ATPase_AAA_core"/>
</dbReference>
<dbReference type="InterPro" id="IPR019489">
    <property type="entry name" value="Clp_ATPase_C"/>
</dbReference>
<dbReference type="InterPro" id="IPR004487">
    <property type="entry name" value="Clp_protease_ATP-bd_su_ClpX"/>
</dbReference>
<dbReference type="InterPro" id="IPR046425">
    <property type="entry name" value="ClpX_bact"/>
</dbReference>
<dbReference type="InterPro" id="IPR027417">
    <property type="entry name" value="P-loop_NTPase"/>
</dbReference>
<dbReference type="InterPro" id="IPR010603">
    <property type="entry name" value="Znf_CppX_C4"/>
</dbReference>
<dbReference type="InterPro" id="IPR038366">
    <property type="entry name" value="Znf_CppX_C4_sf"/>
</dbReference>
<dbReference type="NCBIfam" id="TIGR00382">
    <property type="entry name" value="clpX"/>
    <property type="match status" value="1"/>
</dbReference>
<dbReference type="NCBIfam" id="NF003745">
    <property type="entry name" value="PRK05342.1"/>
    <property type="match status" value="1"/>
</dbReference>
<dbReference type="PANTHER" id="PTHR48102:SF7">
    <property type="entry name" value="ATP-DEPENDENT CLP PROTEASE ATP-BINDING SUBUNIT CLPX-LIKE, MITOCHONDRIAL"/>
    <property type="match status" value="1"/>
</dbReference>
<dbReference type="PANTHER" id="PTHR48102">
    <property type="entry name" value="ATP-DEPENDENT CLP PROTEASE ATP-BINDING SUBUNIT CLPX-LIKE, MITOCHONDRIAL-RELATED"/>
    <property type="match status" value="1"/>
</dbReference>
<dbReference type="Pfam" id="PF07724">
    <property type="entry name" value="AAA_2"/>
    <property type="match status" value="1"/>
</dbReference>
<dbReference type="Pfam" id="PF10431">
    <property type="entry name" value="ClpB_D2-small"/>
    <property type="match status" value="1"/>
</dbReference>
<dbReference type="Pfam" id="PF06689">
    <property type="entry name" value="zf-C4_ClpX"/>
    <property type="match status" value="1"/>
</dbReference>
<dbReference type="SMART" id="SM00382">
    <property type="entry name" value="AAA"/>
    <property type="match status" value="1"/>
</dbReference>
<dbReference type="SMART" id="SM01086">
    <property type="entry name" value="ClpB_D2-small"/>
    <property type="match status" value="1"/>
</dbReference>
<dbReference type="SMART" id="SM00994">
    <property type="entry name" value="zf-C4_ClpX"/>
    <property type="match status" value="1"/>
</dbReference>
<dbReference type="SUPFAM" id="SSF57716">
    <property type="entry name" value="Glucocorticoid receptor-like (DNA-binding domain)"/>
    <property type="match status" value="1"/>
</dbReference>
<dbReference type="SUPFAM" id="SSF52540">
    <property type="entry name" value="P-loop containing nucleoside triphosphate hydrolases"/>
    <property type="match status" value="1"/>
</dbReference>
<dbReference type="PROSITE" id="PS51902">
    <property type="entry name" value="CLPX_ZB"/>
    <property type="match status" value="1"/>
</dbReference>
<proteinExistence type="inferred from homology"/>
<name>CLPX_BORPD</name>
<keyword id="KW-0067">ATP-binding</keyword>
<keyword id="KW-0143">Chaperone</keyword>
<keyword id="KW-0479">Metal-binding</keyword>
<keyword id="KW-0547">Nucleotide-binding</keyword>
<keyword id="KW-0862">Zinc</keyword>
<organism>
    <name type="scientific">Bordetella petrii (strain ATCC BAA-461 / DSM 12804 / CCUG 43448)</name>
    <dbReference type="NCBI Taxonomy" id="340100"/>
    <lineage>
        <taxon>Bacteria</taxon>
        <taxon>Pseudomonadati</taxon>
        <taxon>Pseudomonadota</taxon>
        <taxon>Betaproteobacteria</taxon>
        <taxon>Burkholderiales</taxon>
        <taxon>Alcaligenaceae</taxon>
        <taxon>Bordetella</taxon>
    </lineage>
</organism>
<feature type="chain" id="PRO_1000097924" description="ATP-dependent Clp protease ATP-binding subunit ClpX">
    <location>
        <begin position="1"/>
        <end position="432"/>
    </location>
</feature>
<feature type="domain" description="ClpX-type ZB" evidence="2">
    <location>
        <begin position="3"/>
        <end position="56"/>
    </location>
</feature>
<feature type="binding site" evidence="2">
    <location>
        <position position="15"/>
    </location>
    <ligand>
        <name>Zn(2+)</name>
        <dbReference type="ChEBI" id="CHEBI:29105"/>
    </ligand>
</feature>
<feature type="binding site" evidence="2">
    <location>
        <position position="18"/>
    </location>
    <ligand>
        <name>Zn(2+)</name>
        <dbReference type="ChEBI" id="CHEBI:29105"/>
    </ligand>
</feature>
<feature type="binding site" evidence="2">
    <location>
        <position position="37"/>
    </location>
    <ligand>
        <name>Zn(2+)</name>
        <dbReference type="ChEBI" id="CHEBI:29105"/>
    </ligand>
</feature>
<feature type="binding site" evidence="2">
    <location>
        <position position="40"/>
    </location>
    <ligand>
        <name>Zn(2+)</name>
        <dbReference type="ChEBI" id="CHEBI:29105"/>
    </ligand>
</feature>
<feature type="binding site" evidence="1">
    <location>
        <begin position="121"/>
        <end position="128"/>
    </location>
    <ligand>
        <name>ATP</name>
        <dbReference type="ChEBI" id="CHEBI:30616"/>
    </ligand>
</feature>
<comment type="function">
    <text evidence="1">ATP-dependent specificity component of the Clp protease. It directs the protease to specific substrates. Can perform chaperone functions in the absence of ClpP.</text>
</comment>
<comment type="subunit">
    <text evidence="1">Component of the ClpX-ClpP complex. Forms a hexameric ring that, in the presence of ATP, binds to fourteen ClpP subunits assembled into a disk-like structure with a central cavity, resembling the structure of eukaryotic proteasomes.</text>
</comment>
<comment type="similarity">
    <text evidence="1">Belongs to the ClpX chaperone family.</text>
</comment>
<reference key="1">
    <citation type="journal article" date="2008" name="BMC Genomics">
        <title>The missing link: Bordetella petrii is endowed with both the metabolic versatility of environmental bacteria and virulence traits of pathogenic Bordetellae.</title>
        <authorList>
            <person name="Gross R."/>
            <person name="Guzman C.A."/>
            <person name="Sebaihia M."/>
            <person name="Martin dos Santos V.A.P."/>
            <person name="Pieper D.H."/>
            <person name="Koebnik R."/>
            <person name="Lechner M."/>
            <person name="Bartels D."/>
            <person name="Buhrmester J."/>
            <person name="Choudhuri J.V."/>
            <person name="Ebensen T."/>
            <person name="Gaigalat L."/>
            <person name="Herrmann S."/>
            <person name="Khachane A.N."/>
            <person name="Larisch C."/>
            <person name="Link S."/>
            <person name="Linke B."/>
            <person name="Meyer F."/>
            <person name="Mormann S."/>
            <person name="Nakunst D."/>
            <person name="Rueckert C."/>
            <person name="Schneiker-Bekel S."/>
            <person name="Schulze K."/>
            <person name="Voerholter F.-J."/>
            <person name="Yevsa T."/>
            <person name="Engle J.T."/>
            <person name="Goldman W.E."/>
            <person name="Puehler A."/>
            <person name="Goebel U.B."/>
            <person name="Goesmann A."/>
            <person name="Bloecker H."/>
            <person name="Kaiser O."/>
            <person name="Martinez-Arias R."/>
        </authorList>
    </citation>
    <scope>NUCLEOTIDE SEQUENCE [LARGE SCALE GENOMIC DNA]</scope>
    <source>
        <strain>ATCC BAA-461 / DSM 12804 / CCUG 43448</strain>
    </source>
</reference>
<gene>
    <name evidence="1" type="primary">clpX</name>
    <name type="ordered locus">Bpet2790</name>
</gene>
<accession>A9IR50</accession>
<sequence length="432" mass="47115">MPDKKGSADAKVLHCSFCNKSQHEVRKLIAGPSVFICDECIDLCNDIIREEAQATARAAIRSELPTPSEIKTFLDQYVIGQTLPKRMLAVAVYNHYKRIRHGEIKGDEVELSKSNIMLIGPTGSGKTLLAQTLARMLNVPFVMADATTLTEAGYVGEDVENIIQKLLQNCNYEVEKAQRAIIYIDEIDKISRKSDNPSITRDVSGEGVQQALLKLIEGTVASVPPQGGRKHPNQDFVQVDTTNILFIVGGAFDGLEKVIRDRTEKSGIGFSASVRAKSERGVGELFSEVEPEDLIKFGLIPELVGRLPVVATLDELDEAALVQILTEPKNSLIKQFQKLFAMEGAELDVRPGALKAIARKALKRKTGARGLRSIIEAALLDTMYDLPSQGNVSRVVLDENVIDSDGKPLLIYADEAAAPDKPARSQVRGAAA</sequence>
<evidence type="ECO:0000255" key="1">
    <source>
        <dbReference type="HAMAP-Rule" id="MF_00175"/>
    </source>
</evidence>
<evidence type="ECO:0000255" key="2">
    <source>
        <dbReference type="PROSITE-ProRule" id="PRU01250"/>
    </source>
</evidence>
<protein>
    <recommendedName>
        <fullName evidence="1">ATP-dependent Clp protease ATP-binding subunit ClpX</fullName>
    </recommendedName>
</protein>